<proteinExistence type="inferred from homology"/>
<protein>
    <recommendedName>
        <fullName evidence="1">Large ribosomal subunit protein bL19</fullName>
    </recommendedName>
    <alternativeName>
        <fullName evidence="2">50S ribosomal protein L19</fullName>
    </alternativeName>
</protein>
<comment type="function">
    <text evidence="1">This protein is located at the 30S-50S ribosomal subunit interface and may play a role in the structure and function of the aminoacyl-tRNA binding site.</text>
</comment>
<comment type="similarity">
    <text evidence="1">Belongs to the bacterial ribosomal protein bL19 family.</text>
</comment>
<dbReference type="EMBL" id="BX842651">
    <property type="protein sequence ID" value="CAE79958.1"/>
    <property type="molecule type" value="Genomic_DNA"/>
</dbReference>
<dbReference type="RefSeq" id="WP_011164560.1">
    <property type="nucleotide sequence ID" value="NC_005363.1"/>
</dbReference>
<dbReference type="SMR" id="Q6ML99"/>
<dbReference type="STRING" id="264462.Bd2117"/>
<dbReference type="GeneID" id="93013059"/>
<dbReference type="KEGG" id="bba:Bd2117"/>
<dbReference type="eggNOG" id="COG0335">
    <property type="taxonomic scope" value="Bacteria"/>
</dbReference>
<dbReference type="HOGENOM" id="CLU_103507_2_1_7"/>
<dbReference type="Proteomes" id="UP000008080">
    <property type="component" value="Chromosome"/>
</dbReference>
<dbReference type="GO" id="GO:0022625">
    <property type="term" value="C:cytosolic large ribosomal subunit"/>
    <property type="evidence" value="ECO:0007669"/>
    <property type="project" value="TreeGrafter"/>
</dbReference>
<dbReference type="GO" id="GO:0003735">
    <property type="term" value="F:structural constituent of ribosome"/>
    <property type="evidence" value="ECO:0007669"/>
    <property type="project" value="InterPro"/>
</dbReference>
<dbReference type="GO" id="GO:0006412">
    <property type="term" value="P:translation"/>
    <property type="evidence" value="ECO:0007669"/>
    <property type="project" value="UniProtKB-UniRule"/>
</dbReference>
<dbReference type="Gene3D" id="2.30.30.790">
    <property type="match status" value="1"/>
</dbReference>
<dbReference type="HAMAP" id="MF_00402">
    <property type="entry name" value="Ribosomal_bL19"/>
    <property type="match status" value="1"/>
</dbReference>
<dbReference type="InterPro" id="IPR001857">
    <property type="entry name" value="Ribosomal_bL19"/>
</dbReference>
<dbReference type="InterPro" id="IPR018257">
    <property type="entry name" value="Ribosomal_bL19_CS"/>
</dbReference>
<dbReference type="InterPro" id="IPR038657">
    <property type="entry name" value="Ribosomal_bL19_sf"/>
</dbReference>
<dbReference type="InterPro" id="IPR008991">
    <property type="entry name" value="Translation_prot_SH3-like_sf"/>
</dbReference>
<dbReference type="NCBIfam" id="TIGR01024">
    <property type="entry name" value="rplS_bact"/>
    <property type="match status" value="1"/>
</dbReference>
<dbReference type="PANTHER" id="PTHR15680:SF9">
    <property type="entry name" value="LARGE RIBOSOMAL SUBUNIT PROTEIN BL19M"/>
    <property type="match status" value="1"/>
</dbReference>
<dbReference type="PANTHER" id="PTHR15680">
    <property type="entry name" value="RIBOSOMAL PROTEIN L19"/>
    <property type="match status" value="1"/>
</dbReference>
<dbReference type="Pfam" id="PF01245">
    <property type="entry name" value="Ribosomal_L19"/>
    <property type="match status" value="1"/>
</dbReference>
<dbReference type="PIRSF" id="PIRSF002191">
    <property type="entry name" value="Ribosomal_L19"/>
    <property type="match status" value="1"/>
</dbReference>
<dbReference type="PRINTS" id="PR00061">
    <property type="entry name" value="RIBOSOMALL19"/>
</dbReference>
<dbReference type="SUPFAM" id="SSF50104">
    <property type="entry name" value="Translation proteins SH3-like domain"/>
    <property type="match status" value="1"/>
</dbReference>
<dbReference type="PROSITE" id="PS01015">
    <property type="entry name" value="RIBOSOMAL_L19"/>
    <property type="match status" value="1"/>
</dbReference>
<organism>
    <name type="scientific">Bdellovibrio bacteriovorus (strain ATCC 15356 / DSM 50701 / NCIMB 9529 / HD100)</name>
    <dbReference type="NCBI Taxonomy" id="264462"/>
    <lineage>
        <taxon>Bacteria</taxon>
        <taxon>Pseudomonadati</taxon>
        <taxon>Bdellovibrionota</taxon>
        <taxon>Bdellovibrionia</taxon>
        <taxon>Bdellovibrionales</taxon>
        <taxon>Pseudobdellovibrionaceae</taxon>
        <taxon>Bdellovibrio</taxon>
    </lineage>
</organism>
<name>RL19_BDEBA</name>
<sequence length="123" mass="13463">MAKETNLVRRVSVKAANKNIQSFNSGDTVNVFVKVKEGEKERVQLYKGIVTKIQGSGAAKSFTVRKMSAGVGVERTFPFASPALDKVEIVNVGKVRRSKLYYLRALKGKAAKIESELVSSKAE</sequence>
<reference key="1">
    <citation type="journal article" date="2004" name="Science">
        <title>A predator unmasked: life cycle of Bdellovibrio bacteriovorus from a genomic perspective.</title>
        <authorList>
            <person name="Rendulic S."/>
            <person name="Jagtap P."/>
            <person name="Rosinus A."/>
            <person name="Eppinger M."/>
            <person name="Baar C."/>
            <person name="Lanz C."/>
            <person name="Keller H."/>
            <person name="Lambert C."/>
            <person name="Evans K.J."/>
            <person name="Goesmann A."/>
            <person name="Meyer F."/>
            <person name="Sockett R.E."/>
            <person name="Schuster S.C."/>
        </authorList>
    </citation>
    <scope>NUCLEOTIDE SEQUENCE [LARGE SCALE GENOMIC DNA]</scope>
    <source>
        <strain>ATCC 15356 / DSM 50701 / NCIMB 9529 / HD100</strain>
    </source>
</reference>
<accession>Q6ML99</accession>
<feature type="chain" id="PRO_0000163417" description="Large ribosomal subunit protein bL19">
    <location>
        <begin position="1"/>
        <end position="123"/>
    </location>
</feature>
<keyword id="KW-1185">Reference proteome</keyword>
<keyword id="KW-0687">Ribonucleoprotein</keyword>
<keyword id="KW-0689">Ribosomal protein</keyword>
<evidence type="ECO:0000255" key="1">
    <source>
        <dbReference type="HAMAP-Rule" id="MF_00402"/>
    </source>
</evidence>
<evidence type="ECO:0000305" key="2"/>
<gene>
    <name evidence="1" type="primary">rplS</name>
    <name type="ordered locus">Bd2117</name>
</gene>